<organism>
    <name type="scientific">Burkholderia ambifaria (strain ATCC BAA-244 / DSM 16087 / CCUG 44356 / LMG 19182 / AMMD)</name>
    <name type="common">Burkholderia cepacia (strain AMMD)</name>
    <dbReference type="NCBI Taxonomy" id="339670"/>
    <lineage>
        <taxon>Bacteria</taxon>
        <taxon>Pseudomonadati</taxon>
        <taxon>Pseudomonadota</taxon>
        <taxon>Betaproteobacteria</taxon>
        <taxon>Burkholderiales</taxon>
        <taxon>Burkholderiaceae</taxon>
        <taxon>Burkholderia</taxon>
        <taxon>Burkholderia cepacia complex</taxon>
    </lineage>
</organism>
<proteinExistence type="inferred from homology"/>
<reference key="1">
    <citation type="submission" date="2006-08" db="EMBL/GenBank/DDBJ databases">
        <title>Complete sequence of chromosome 1 of Burkholderia cepacia AMMD.</title>
        <authorList>
            <person name="Copeland A."/>
            <person name="Lucas S."/>
            <person name="Lapidus A."/>
            <person name="Barry K."/>
            <person name="Detter J.C."/>
            <person name="Glavina del Rio T."/>
            <person name="Hammon N."/>
            <person name="Israni S."/>
            <person name="Pitluck S."/>
            <person name="Bruce D."/>
            <person name="Chain P."/>
            <person name="Malfatti S."/>
            <person name="Shin M."/>
            <person name="Vergez L."/>
            <person name="Schmutz J."/>
            <person name="Larimer F."/>
            <person name="Land M."/>
            <person name="Hauser L."/>
            <person name="Kyrpides N."/>
            <person name="Kim E."/>
            <person name="Parke J."/>
            <person name="Coenye T."/>
            <person name="Konstantinidis K."/>
            <person name="Ramette A."/>
            <person name="Tiedje J."/>
            <person name="Richardson P."/>
        </authorList>
    </citation>
    <scope>NUCLEOTIDE SEQUENCE [LARGE SCALE GENOMIC DNA]</scope>
    <source>
        <strain>ATCC BAA-244 / DSM 16087 / CCUG 44356 / LMG 19182 / AMMD</strain>
    </source>
</reference>
<accession>Q0BI45</accession>
<protein>
    <recommendedName>
        <fullName evidence="1">4-hydroxybenzoate octaprenyltransferase</fullName>
        <ecNumber evidence="1">2.5.1.39</ecNumber>
    </recommendedName>
    <alternativeName>
        <fullName evidence="1">4-HB polyprenyltransferase</fullName>
    </alternativeName>
</protein>
<evidence type="ECO:0000255" key="1">
    <source>
        <dbReference type="HAMAP-Rule" id="MF_01635"/>
    </source>
</evidence>
<comment type="function">
    <text evidence="1">Catalyzes the prenylation of para-hydroxybenzoate (PHB) with an all-trans polyprenyl group. Mediates the second step in the final reaction sequence of ubiquinone-8 (UQ-8) biosynthesis, which is the condensation of the polyisoprenoid side chain with PHB, generating the first membrane-bound Q intermediate 3-octaprenyl-4-hydroxybenzoate.</text>
</comment>
<comment type="catalytic activity">
    <reaction evidence="1">
        <text>all-trans-octaprenyl diphosphate + 4-hydroxybenzoate = 4-hydroxy-3-(all-trans-octaprenyl)benzoate + diphosphate</text>
        <dbReference type="Rhea" id="RHEA:27782"/>
        <dbReference type="ChEBI" id="CHEBI:1617"/>
        <dbReference type="ChEBI" id="CHEBI:17879"/>
        <dbReference type="ChEBI" id="CHEBI:33019"/>
        <dbReference type="ChEBI" id="CHEBI:57711"/>
        <dbReference type="EC" id="2.5.1.39"/>
    </reaction>
</comment>
<comment type="cofactor">
    <cofactor evidence="1">
        <name>Mg(2+)</name>
        <dbReference type="ChEBI" id="CHEBI:18420"/>
    </cofactor>
</comment>
<comment type="pathway">
    <text evidence="1">Cofactor biosynthesis; ubiquinone biosynthesis.</text>
</comment>
<comment type="subcellular location">
    <subcellularLocation>
        <location evidence="1">Cell inner membrane</location>
        <topology evidence="1">Multi-pass membrane protein</topology>
    </subcellularLocation>
</comment>
<comment type="similarity">
    <text evidence="1">Belongs to the UbiA prenyltransferase family.</text>
</comment>
<gene>
    <name evidence="1" type="primary">ubiA</name>
    <name type="ordered locus">Bamb_0619</name>
</gene>
<dbReference type="EC" id="2.5.1.39" evidence="1"/>
<dbReference type="EMBL" id="CP000440">
    <property type="protein sequence ID" value="ABI86178.1"/>
    <property type="molecule type" value="Genomic_DNA"/>
</dbReference>
<dbReference type="RefSeq" id="WP_011656015.1">
    <property type="nucleotide sequence ID" value="NZ_CP009798.1"/>
</dbReference>
<dbReference type="SMR" id="Q0BI45"/>
<dbReference type="GeneID" id="93083968"/>
<dbReference type="KEGG" id="bam:Bamb_0619"/>
<dbReference type="PATRIC" id="fig|339670.21.peg.977"/>
<dbReference type="eggNOG" id="COG0382">
    <property type="taxonomic scope" value="Bacteria"/>
</dbReference>
<dbReference type="UniPathway" id="UPA00232"/>
<dbReference type="Proteomes" id="UP000000662">
    <property type="component" value="Chromosome 1"/>
</dbReference>
<dbReference type="GO" id="GO:0005886">
    <property type="term" value="C:plasma membrane"/>
    <property type="evidence" value="ECO:0007669"/>
    <property type="project" value="UniProtKB-SubCell"/>
</dbReference>
<dbReference type="GO" id="GO:0008412">
    <property type="term" value="F:4-hydroxybenzoate polyprenyltransferase activity"/>
    <property type="evidence" value="ECO:0007669"/>
    <property type="project" value="UniProtKB-UniRule"/>
</dbReference>
<dbReference type="GO" id="GO:0006744">
    <property type="term" value="P:ubiquinone biosynthetic process"/>
    <property type="evidence" value="ECO:0007669"/>
    <property type="project" value="UniProtKB-UniRule"/>
</dbReference>
<dbReference type="CDD" id="cd13959">
    <property type="entry name" value="PT_UbiA_COQ2"/>
    <property type="match status" value="1"/>
</dbReference>
<dbReference type="FunFam" id="1.10.357.140:FF:000002">
    <property type="entry name" value="4-hydroxybenzoate octaprenyltransferase"/>
    <property type="match status" value="1"/>
</dbReference>
<dbReference type="FunFam" id="1.20.120.1780:FF:000001">
    <property type="entry name" value="4-hydroxybenzoate octaprenyltransferase"/>
    <property type="match status" value="1"/>
</dbReference>
<dbReference type="Gene3D" id="1.10.357.140">
    <property type="entry name" value="UbiA prenyltransferase"/>
    <property type="match status" value="1"/>
</dbReference>
<dbReference type="Gene3D" id="1.20.120.1780">
    <property type="entry name" value="UbiA prenyltransferase"/>
    <property type="match status" value="1"/>
</dbReference>
<dbReference type="HAMAP" id="MF_01635">
    <property type="entry name" value="UbiA"/>
    <property type="match status" value="1"/>
</dbReference>
<dbReference type="InterPro" id="IPR006370">
    <property type="entry name" value="HB_polyprenyltransferase-like"/>
</dbReference>
<dbReference type="InterPro" id="IPR039653">
    <property type="entry name" value="Prenyltransferase"/>
</dbReference>
<dbReference type="InterPro" id="IPR000537">
    <property type="entry name" value="UbiA_prenyltransferase"/>
</dbReference>
<dbReference type="InterPro" id="IPR030470">
    <property type="entry name" value="UbiA_prenylTrfase_CS"/>
</dbReference>
<dbReference type="InterPro" id="IPR044878">
    <property type="entry name" value="UbiA_sf"/>
</dbReference>
<dbReference type="NCBIfam" id="TIGR01474">
    <property type="entry name" value="ubiA_proteo"/>
    <property type="match status" value="1"/>
</dbReference>
<dbReference type="PANTHER" id="PTHR11048:SF28">
    <property type="entry name" value="4-HYDROXYBENZOATE POLYPRENYLTRANSFERASE, MITOCHONDRIAL"/>
    <property type="match status" value="1"/>
</dbReference>
<dbReference type="PANTHER" id="PTHR11048">
    <property type="entry name" value="PRENYLTRANSFERASES"/>
    <property type="match status" value="1"/>
</dbReference>
<dbReference type="Pfam" id="PF01040">
    <property type="entry name" value="UbiA"/>
    <property type="match status" value="1"/>
</dbReference>
<dbReference type="PROSITE" id="PS00943">
    <property type="entry name" value="UBIA"/>
    <property type="match status" value="1"/>
</dbReference>
<sequence>MLARFPLYLRLVRMDKPIGSLLLLWPTLNALWIASDGHPRWPLLAIFVLGTLLMRSAGCAMNDYADRDFDRHVKRTADRPLTSGKIRAWEAVAIAVVLAFISFLLIQPLNTLTKELSVVALFVAGSYPFMKRFFAIPQAYLGIAFGFGIPMAFAAVQDTVPMLAWVMLIANIFWSVAYDTEYAMVDRDDDIKIGIRTSALTFGRFDVAAVMLCYAATLGIYVWIGVTLGFGLAYWAGWAAAVGCALYHYTLIKDRERMPCFAAFRHNNWLGGVLFAGIAAHYLLAGTAGN</sequence>
<feature type="chain" id="PRO_1000069809" description="4-hydroxybenzoate octaprenyltransferase">
    <location>
        <begin position="1"/>
        <end position="290"/>
    </location>
</feature>
<feature type="transmembrane region" description="Helical" evidence="1">
    <location>
        <begin position="41"/>
        <end position="61"/>
    </location>
</feature>
<feature type="transmembrane region" description="Helical" evidence="1">
    <location>
        <begin position="89"/>
        <end position="109"/>
    </location>
</feature>
<feature type="transmembrane region" description="Helical" evidence="1">
    <location>
        <begin position="133"/>
        <end position="153"/>
    </location>
</feature>
<feature type="transmembrane region" description="Helical" evidence="1">
    <location>
        <begin position="158"/>
        <end position="178"/>
    </location>
</feature>
<feature type="transmembrane region" description="Helical" evidence="1">
    <location>
        <begin position="202"/>
        <end position="224"/>
    </location>
</feature>
<feature type="transmembrane region" description="Helical" evidence="1">
    <location>
        <begin position="269"/>
        <end position="289"/>
    </location>
</feature>
<keyword id="KW-0997">Cell inner membrane</keyword>
<keyword id="KW-1003">Cell membrane</keyword>
<keyword id="KW-0460">Magnesium</keyword>
<keyword id="KW-0472">Membrane</keyword>
<keyword id="KW-0808">Transferase</keyword>
<keyword id="KW-0812">Transmembrane</keyword>
<keyword id="KW-1133">Transmembrane helix</keyword>
<keyword id="KW-0831">Ubiquinone biosynthesis</keyword>
<name>UBIA_BURCM</name>